<accession>A9MRK2</accession>
<gene>
    <name type="primary">rcnA</name>
    <name type="ordered locus">SARI_04629</name>
</gene>
<sequence length="283" mass="31134">MGEFSILLQQGNGWFFIPSAILLGILHGLEPGHSKTMMAAFIIAIKGTIKQAFMLGLAATLSHTAVVWLIALGGMYLSRAYAAESVEPWLQLISAIIILGTACWMFWRTWRGEQQWLTGSHHDHDHDHDHDHDHDHDHDHDHDHHGHTYPEGAMSKAYQDAHERAHAADIQRRFHGQKVTNEQILLFGLTGGLIPCPAAITLLLICIQLQALTLGATMVLCFSLGLALTLVAVGVGAAISVQQAVKRWNGFTTLARRAPYFSSILIGLVGLYMGIHGYTGIMQ</sequence>
<organism>
    <name type="scientific">Salmonella arizonae (strain ATCC BAA-731 / CDC346-86 / RSK2980)</name>
    <dbReference type="NCBI Taxonomy" id="41514"/>
    <lineage>
        <taxon>Bacteria</taxon>
        <taxon>Pseudomonadati</taxon>
        <taxon>Pseudomonadota</taxon>
        <taxon>Gammaproteobacteria</taxon>
        <taxon>Enterobacterales</taxon>
        <taxon>Enterobacteriaceae</taxon>
        <taxon>Salmonella</taxon>
    </lineage>
</organism>
<name>RCNA_SALAR</name>
<proteinExistence type="inferred from homology"/>
<feature type="chain" id="PRO_0000333787" description="Nickel/cobalt efflux system RcnA">
    <location>
        <begin position="1"/>
        <end position="283"/>
    </location>
</feature>
<feature type="topological domain" description="Periplasmic" evidence="2">
    <location>
        <begin position="1"/>
        <end position="5"/>
    </location>
</feature>
<feature type="transmembrane region" description="Helical" evidence="2">
    <location>
        <begin position="6"/>
        <end position="26"/>
    </location>
</feature>
<feature type="topological domain" description="Cytoplasmic" evidence="2">
    <location>
        <begin position="27"/>
        <end position="51"/>
    </location>
</feature>
<feature type="transmembrane region" description="Helical" evidence="2">
    <location>
        <begin position="52"/>
        <end position="72"/>
    </location>
</feature>
<feature type="topological domain" description="Periplasmic" evidence="2">
    <location>
        <begin position="73"/>
        <end position="85"/>
    </location>
</feature>
<feature type="transmembrane region" description="Helical" evidence="2">
    <location>
        <begin position="86"/>
        <end position="106"/>
    </location>
</feature>
<feature type="topological domain" description="Cytoplasmic" evidence="2">
    <location>
        <begin position="107"/>
        <end position="183"/>
    </location>
</feature>
<feature type="transmembrane region" description="Helical" evidence="2">
    <location>
        <begin position="184"/>
        <end position="204"/>
    </location>
</feature>
<feature type="topological domain" description="Periplasmic" evidence="2">
    <location>
        <begin position="205"/>
        <end position="218"/>
    </location>
</feature>
<feature type="transmembrane region" description="Helical" evidence="2">
    <location>
        <begin position="219"/>
        <end position="239"/>
    </location>
</feature>
<feature type="topological domain" description="Cytoplasmic" evidence="2">
    <location>
        <begin position="240"/>
        <end position="260"/>
    </location>
</feature>
<feature type="transmembrane region" description="Helical" evidence="2">
    <location>
        <begin position="261"/>
        <end position="281"/>
    </location>
</feature>
<feature type="topological domain" description="Periplasmic" evidence="2">
    <location>
        <begin position="282"/>
        <end position="283"/>
    </location>
</feature>
<feature type="region of interest" description="Disordered" evidence="3">
    <location>
        <begin position="120"/>
        <end position="149"/>
    </location>
</feature>
<feature type="compositionally biased region" description="Basic and acidic residues" evidence="3">
    <location>
        <begin position="120"/>
        <end position="148"/>
    </location>
</feature>
<reference key="1">
    <citation type="submission" date="2007-11" db="EMBL/GenBank/DDBJ databases">
        <authorList>
            <consortium name="The Salmonella enterica serovar Arizonae Genome Sequencing Project"/>
            <person name="McClelland M."/>
            <person name="Sanderson E.K."/>
            <person name="Porwollik S."/>
            <person name="Spieth J."/>
            <person name="Clifton W.S."/>
            <person name="Fulton R."/>
            <person name="Chunyan W."/>
            <person name="Wollam A."/>
            <person name="Shah N."/>
            <person name="Pepin K."/>
            <person name="Bhonagiri V."/>
            <person name="Nash W."/>
            <person name="Johnson M."/>
            <person name="Thiruvilangam P."/>
            <person name="Wilson R."/>
        </authorList>
    </citation>
    <scope>NUCLEOTIDE SEQUENCE [LARGE SCALE GENOMIC DNA]</scope>
    <source>
        <strain>ATCC BAA-731 / CDC346-86 / RSK2980</strain>
    </source>
</reference>
<dbReference type="EMBL" id="CP000880">
    <property type="protein sequence ID" value="ABX24400.1"/>
    <property type="molecule type" value="Genomic_DNA"/>
</dbReference>
<dbReference type="STRING" id="41514.SARI_04629"/>
<dbReference type="KEGG" id="ses:SARI_04629"/>
<dbReference type="HOGENOM" id="CLU_058605_2_0_6"/>
<dbReference type="Proteomes" id="UP000002084">
    <property type="component" value="Chromosome"/>
</dbReference>
<dbReference type="GO" id="GO:0005886">
    <property type="term" value="C:plasma membrane"/>
    <property type="evidence" value="ECO:0007669"/>
    <property type="project" value="UniProtKB-SubCell"/>
</dbReference>
<dbReference type="GO" id="GO:0046583">
    <property type="term" value="F:monoatomic cation efflux transmembrane transporter activity"/>
    <property type="evidence" value="ECO:0007669"/>
    <property type="project" value="TreeGrafter"/>
</dbReference>
<dbReference type="GO" id="GO:0015099">
    <property type="term" value="F:nickel cation transmembrane transporter activity"/>
    <property type="evidence" value="ECO:0007669"/>
    <property type="project" value="InterPro"/>
</dbReference>
<dbReference type="GO" id="GO:0006824">
    <property type="term" value="P:cobalt ion transport"/>
    <property type="evidence" value="ECO:0007669"/>
    <property type="project" value="UniProtKB-KW"/>
</dbReference>
<dbReference type="GO" id="GO:0032025">
    <property type="term" value="P:response to cobalt ion"/>
    <property type="evidence" value="ECO:0007669"/>
    <property type="project" value="TreeGrafter"/>
</dbReference>
<dbReference type="GO" id="GO:0010045">
    <property type="term" value="P:response to nickel cation"/>
    <property type="evidence" value="ECO:0007669"/>
    <property type="project" value="TreeGrafter"/>
</dbReference>
<dbReference type="Gene3D" id="3.40.50.1980">
    <property type="entry name" value="Nitrogenase molybdenum iron protein domain"/>
    <property type="match status" value="1"/>
</dbReference>
<dbReference type="InterPro" id="IPR011541">
    <property type="entry name" value="Ni/Co_transpt_high_affinity"/>
</dbReference>
<dbReference type="InterPro" id="IPR051224">
    <property type="entry name" value="NiCoT_RcnA"/>
</dbReference>
<dbReference type="NCBIfam" id="NF007454">
    <property type="entry name" value="PRK10019.1"/>
    <property type="match status" value="1"/>
</dbReference>
<dbReference type="PANTHER" id="PTHR40659">
    <property type="entry name" value="NICKEL/COBALT EFFLUX SYSTEM RCNA"/>
    <property type="match status" value="1"/>
</dbReference>
<dbReference type="PANTHER" id="PTHR40659:SF1">
    <property type="entry name" value="NICKEL_COBALT EFFLUX SYSTEM RCNA"/>
    <property type="match status" value="1"/>
</dbReference>
<dbReference type="Pfam" id="PF03824">
    <property type="entry name" value="NicO"/>
    <property type="match status" value="1"/>
</dbReference>
<keyword id="KW-0997">Cell inner membrane</keyword>
<keyword id="KW-1003">Cell membrane</keyword>
<keyword id="KW-0170">Cobalt</keyword>
<keyword id="KW-0171">Cobalt transport</keyword>
<keyword id="KW-0406">Ion transport</keyword>
<keyword id="KW-0472">Membrane</keyword>
<keyword id="KW-0533">Nickel</keyword>
<keyword id="KW-0921">Nickel transport</keyword>
<keyword id="KW-1185">Reference proteome</keyword>
<keyword id="KW-0812">Transmembrane</keyword>
<keyword id="KW-1133">Transmembrane helix</keyword>
<keyword id="KW-0813">Transport</keyword>
<comment type="function">
    <text evidence="1">Efflux system for nickel and cobalt.</text>
</comment>
<comment type="subcellular location">
    <subcellularLocation>
        <location evidence="1">Cell inner membrane</location>
        <topology evidence="1">Multi-pass membrane protein</topology>
    </subcellularLocation>
</comment>
<comment type="induction">
    <text evidence="1">By nickel and cobalt. Transcriptionally repressed by RcnR (By similarity).</text>
</comment>
<comment type="similarity">
    <text evidence="4">Belongs to the NiCoT transporter (TC 2.A.52) family. RcnA subfamily.</text>
</comment>
<evidence type="ECO:0000250" key="1"/>
<evidence type="ECO:0000255" key="2"/>
<evidence type="ECO:0000256" key="3">
    <source>
        <dbReference type="SAM" id="MobiDB-lite"/>
    </source>
</evidence>
<evidence type="ECO:0000305" key="4"/>
<protein>
    <recommendedName>
        <fullName>Nickel/cobalt efflux system RcnA</fullName>
    </recommendedName>
</protein>